<dbReference type="EMBL" id="AJ583433">
    <property type="protein sequence ID" value="CAE47426.1"/>
    <property type="molecule type" value="mRNA"/>
</dbReference>
<dbReference type="EMBL" id="AM156947">
    <property type="protein sequence ID" value="CAJ42307.1"/>
    <property type="molecule type" value="mRNA"/>
</dbReference>
<dbReference type="EMBL" id="AC087359">
    <property type="status" value="NOT_ANNOTATED_CDS"/>
    <property type="molecule type" value="Genomic_DNA"/>
</dbReference>
<dbReference type="EMBL" id="AC109335">
    <property type="status" value="NOT_ANNOTATED_CDS"/>
    <property type="molecule type" value="Genomic_DNA"/>
</dbReference>
<dbReference type="EMBL" id="AK127108">
    <property type="status" value="NOT_ANNOTATED_CDS"/>
    <property type="molecule type" value="mRNA"/>
</dbReference>
<dbReference type="EMBL" id="BC022867">
    <property type="protein sequence ID" value="AAH22867.1"/>
    <property type="status" value="ALT_INIT"/>
    <property type="molecule type" value="mRNA"/>
</dbReference>
<dbReference type="EMBL" id="BC152993">
    <property type="protein sequence ID" value="AAI52994.1"/>
    <property type="molecule type" value="mRNA"/>
</dbReference>
<dbReference type="CCDS" id="CCDS43744.1">
    <molecule id="Q1MSJ5-1"/>
</dbReference>
<dbReference type="CCDS" id="CCDS78344.1">
    <molecule id="Q1MSJ5-2"/>
</dbReference>
<dbReference type="RefSeq" id="NP_001278268.1">
    <molecule id="Q1MSJ5-2"/>
    <property type="nucleotide sequence ID" value="NM_001291339.2"/>
</dbReference>
<dbReference type="RefSeq" id="NP_079066.5">
    <molecule id="Q1MSJ5-1"/>
    <property type="nucleotide sequence ID" value="NM_024790.6"/>
</dbReference>
<dbReference type="RefSeq" id="XP_005251362.3">
    <molecule id="Q1MSJ5-3"/>
    <property type="nucleotide sequence ID" value="XM_005251305.5"/>
</dbReference>
<dbReference type="SMR" id="Q1MSJ5"/>
<dbReference type="BioGRID" id="122939">
    <property type="interactions" value="103"/>
</dbReference>
<dbReference type="FunCoup" id="Q1MSJ5">
    <property type="interactions" value="1441"/>
</dbReference>
<dbReference type="IntAct" id="Q1MSJ5">
    <property type="interactions" value="72"/>
</dbReference>
<dbReference type="MINT" id="Q1MSJ5"/>
<dbReference type="STRING" id="9606.ENSP00000262210"/>
<dbReference type="iPTMnet" id="Q1MSJ5"/>
<dbReference type="PhosphoSitePlus" id="Q1MSJ5"/>
<dbReference type="BioMuta" id="CSPP1"/>
<dbReference type="DMDM" id="313104301"/>
<dbReference type="jPOST" id="Q1MSJ5"/>
<dbReference type="MassIVE" id="Q1MSJ5"/>
<dbReference type="PaxDb" id="9606-ENSP00000262210"/>
<dbReference type="PeptideAtlas" id="Q1MSJ5"/>
<dbReference type="ProteomicsDB" id="61228">
    <molecule id="Q1MSJ5-3"/>
</dbReference>
<dbReference type="ProteomicsDB" id="61229">
    <molecule id="Q1MSJ5-1"/>
</dbReference>
<dbReference type="ProteomicsDB" id="61230">
    <molecule id="Q1MSJ5-2"/>
</dbReference>
<dbReference type="Pumba" id="Q1MSJ5"/>
<dbReference type="Antibodypedia" id="42498">
    <property type="antibodies" value="170 antibodies from 28 providers"/>
</dbReference>
<dbReference type="DNASU" id="79848"/>
<dbReference type="Ensembl" id="ENST00000519668.1">
    <molecule id="Q1MSJ5-2"/>
    <property type="protein sequence ID" value="ENSP00000430092.1"/>
    <property type="gene ID" value="ENSG00000104218.16"/>
</dbReference>
<dbReference type="Ensembl" id="ENST00000674993.1">
    <molecule id="Q1MSJ5-3"/>
    <property type="protein sequence ID" value="ENSP00000502454.1"/>
    <property type="gene ID" value="ENSG00000104218.16"/>
</dbReference>
<dbReference type="Ensembl" id="ENST00000676317.1">
    <molecule id="Q1MSJ5-1"/>
    <property type="protein sequence ID" value="ENSP00000502047.1"/>
    <property type="gene ID" value="ENSG00000104218.16"/>
</dbReference>
<dbReference type="GeneID" id="79848"/>
<dbReference type="KEGG" id="hsa:79848"/>
<dbReference type="UCSC" id="uc003xxj.4">
    <molecule id="Q1MSJ5-3"/>
    <property type="organism name" value="human"/>
</dbReference>
<dbReference type="AGR" id="HGNC:26193"/>
<dbReference type="CTD" id="79848"/>
<dbReference type="DisGeNET" id="79848"/>
<dbReference type="GeneCards" id="CSPP1"/>
<dbReference type="GeneReviews" id="CSPP1"/>
<dbReference type="HGNC" id="HGNC:26193">
    <property type="gene designation" value="CSPP1"/>
</dbReference>
<dbReference type="HPA" id="ENSG00000104218">
    <property type="expression patterns" value="Low tissue specificity"/>
</dbReference>
<dbReference type="MalaCards" id="CSPP1"/>
<dbReference type="MIM" id="611654">
    <property type="type" value="gene"/>
</dbReference>
<dbReference type="MIM" id="615636">
    <property type="type" value="phenotype"/>
</dbReference>
<dbReference type="neXtProt" id="NX_Q1MSJ5"/>
<dbReference type="OpenTargets" id="ENSG00000104218"/>
<dbReference type="Orphanet" id="475">
    <property type="disease" value="Joubert syndrome"/>
</dbReference>
<dbReference type="Orphanet" id="397715">
    <property type="disease" value="Joubert syndrome with Jeune asphyxiating thoracic dystrophy"/>
</dbReference>
<dbReference type="Orphanet" id="564">
    <property type="disease" value="Meckel syndrome"/>
</dbReference>
<dbReference type="PharmGKB" id="PA142672066"/>
<dbReference type="VEuPathDB" id="HostDB:ENSG00000104218"/>
<dbReference type="eggNOG" id="ENOG502QTSW">
    <property type="taxonomic scope" value="Eukaryota"/>
</dbReference>
<dbReference type="GeneTree" id="ENSGT00390000015084"/>
<dbReference type="HOGENOM" id="CLU_009662_0_0_1"/>
<dbReference type="InParanoid" id="Q1MSJ5"/>
<dbReference type="OrthoDB" id="10044099at2759"/>
<dbReference type="PAN-GO" id="Q1MSJ5">
    <property type="GO annotations" value="3 GO annotations based on evolutionary models"/>
</dbReference>
<dbReference type="PhylomeDB" id="Q1MSJ5"/>
<dbReference type="TreeFam" id="TF335475"/>
<dbReference type="PathwayCommons" id="Q1MSJ5"/>
<dbReference type="SignaLink" id="Q1MSJ5"/>
<dbReference type="BioGRID-ORCS" id="79848">
    <property type="hits" value="14 hits in 1157 CRISPR screens"/>
</dbReference>
<dbReference type="CD-CODE" id="8C2F96ED">
    <property type="entry name" value="Centrosome"/>
</dbReference>
<dbReference type="CD-CODE" id="B5B9A610">
    <property type="entry name" value="PML body"/>
</dbReference>
<dbReference type="ChiTaRS" id="CSPP1">
    <property type="organism name" value="human"/>
</dbReference>
<dbReference type="GenomeRNAi" id="79848"/>
<dbReference type="Pharos" id="Q1MSJ5">
    <property type="development level" value="Tbio"/>
</dbReference>
<dbReference type="PRO" id="PR:Q1MSJ5"/>
<dbReference type="Proteomes" id="UP000005640">
    <property type="component" value="Chromosome 8"/>
</dbReference>
<dbReference type="RNAct" id="Q1MSJ5">
    <property type="molecule type" value="protein"/>
</dbReference>
<dbReference type="Bgee" id="ENSG00000104218">
    <property type="expression patterns" value="Expressed in bronchial epithelial cell and 195 other cell types or tissues"/>
</dbReference>
<dbReference type="ExpressionAtlas" id="Q1MSJ5">
    <property type="expression patterns" value="baseline and differential"/>
</dbReference>
<dbReference type="GO" id="GO:0034451">
    <property type="term" value="C:centriolar satellite"/>
    <property type="evidence" value="ECO:0000314"/>
    <property type="project" value="HPA"/>
</dbReference>
<dbReference type="GO" id="GO:0005813">
    <property type="term" value="C:centrosome"/>
    <property type="evidence" value="ECO:0000314"/>
    <property type="project" value="HPA"/>
</dbReference>
<dbReference type="GO" id="GO:0036064">
    <property type="term" value="C:ciliary basal body"/>
    <property type="evidence" value="ECO:0000314"/>
    <property type="project" value="HPA"/>
</dbReference>
<dbReference type="GO" id="GO:0005929">
    <property type="term" value="C:cilium"/>
    <property type="evidence" value="ECO:0000314"/>
    <property type="project" value="HPA"/>
</dbReference>
<dbReference type="GO" id="GO:0005737">
    <property type="term" value="C:cytoplasm"/>
    <property type="evidence" value="ECO:0007669"/>
    <property type="project" value="UniProtKB-KW"/>
</dbReference>
<dbReference type="GO" id="GO:0043231">
    <property type="term" value="C:intracellular membrane-bounded organelle"/>
    <property type="evidence" value="ECO:0000314"/>
    <property type="project" value="HPA"/>
</dbReference>
<dbReference type="GO" id="GO:0005874">
    <property type="term" value="C:microtubule"/>
    <property type="evidence" value="ECO:0007669"/>
    <property type="project" value="UniProtKB-KW"/>
</dbReference>
<dbReference type="GO" id="GO:0005654">
    <property type="term" value="C:nucleoplasm"/>
    <property type="evidence" value="ECO:0000314"/>
    <property type="project" value="HPA"/>
</dbReference>
<dbReference type="GO" id="GO:0005819">
    <property type="term" value="C:spindle"/>
    <property type="evidence" value="ECO:0000314"/>
    <property type="project" value="UniProtKB"/>
</dbReference>
<dbReference type="GO" id="GO:0000922">
    <property type="term" value="C:spindle pole"/>
    <property type="evidence" value="ECO:0000314"/>
    <property type="project" value="UniProtKB"/>
</dbReference>
<dbReference type="GO" id="GO:0051781">
    <property type="term" value="P:positive regulation of cell division"/>
    <property type="evidence" value="ECO:0000315"/>
    <property type="project" value="UniProtKB"/>
</dbReference>
<dbReference type="GO" id="GO:0032467">
    <property type="term" value="P:positive regulation of cytokinesis"/>
    <property type="evidence" value="ECO:0000315"/>
    <property type="project" value="UniProtKB"/>
</dbReference>
<dbReference type="InterPro" id="IPR026708">
    <property type="entry name" value="CSPP1"/>
</dbReference>
<dbReference type="PANTHER" id="PTHR21616:SF2">
    <property type="entry name" value="CENTROSOME AND SPINDLE POLE-ASSOCIATED PROTEIN 1"/>
    <property type="match status" value="1"/>
</dbReference>
<dbReference type="PANTHER" id="PTHR21616">
    <property type="entry name" value="CENTROSOME SPINDLE POLE ASSOCIATED PROTEIN"/>
    <property type="match status" value="1"/>
</dbReference>
<dbReference type="Pfam" id="PF24578">
    <property type="entry name" value="CSPP1_C"/>
    <property type="match status" value="1"/>
</dbReference>
<protein>
    <recommendedName>
        <fullName>Centrosome and spindle pole-associated protein 1</fullName>
    </recommendedName>
</protein>
<accession>Q1MSJ5</accession>
<accession>A6ND63</accession>
<accession>Q70F00</accession>
<accession>Q8TBC1</accession>
<name>CSPP1_HUMAN</name>
<reference key="1">
    <citation type="journal article" date="2005" name="Oncogene">
        <title>Identification of a novel centrosome/microtubule-associated coiled-coil protein involved in cell-cycle progression and spindle organization.</title>
        <authorList>
            <person name="Patzke S."/>
            <person name="Hauge H."/>
            <person name="Sioud M."/>
            <person name="Finne E.F."/>
            <person name="Sivertsen E.A."/>
            <person name="Delabie J."/>
            <person name="Stokke T."/>
            <person name="Aasheim H.-C."/>
        </authorList>
    </citation>
    <scope>NUCLEOTIDE SEQUENCE [MRNA] (ISOFORM 2)</scope>
    <scope>SUBCELLULAR LOCATION</scope>
    <scope>PHOSPHORYLATION</scope>
    <scope>TISSUE SPECIFICITY</scope>
    <source>
        <tissue>Testis</tissue>
    </source>
</reference>
<reference key="2">
    <citation type="journal article" date="2006" name="J. Cell. Physiol.">
        <title>CSPP and CSPP-L associate with centrosomes and microtubules and differently affect microtubule organization.</title>
        <authorList>
            <person name="Patzke S."/>
            <person name="Stokke T."/>
            <person name="Aasheim H.-C."/>
        </authorList>
    </citation>
    <scope>NUCLEOTIDE SEQUENCE [MRNA] (ISOFORM 1)</scope>
    <scope>FUNCTION</scope>
    <scope>DEVELOPMENTAL STAGE</scope>
    <scope>SUBCELLULAR LOCATION</scope>
    <source>
        <tissue>Testis</tissue>
    </source>
</reference>
<reference key="3">
    <citation type="journal article" date="2006" name="Nature">
        <title>DNA sequence and analysis of human chromosome 8.</title>
        <authorList>
            <person name="Nusbaum C."/>
            <person name="Mikkelsen T.S."/>
            <person name="Zody M.C."/>
            <person name="Asakawa S."/>
            <person name="Taudien S."/>
            <person name="Garber M."/>
            <person name="Kodira C.D."/>
            <person name="Schueler M.G."/>
            <person name="Shimizu A."/>
            <person name="Whittaker C.A."/>
            <person name="Chang J.L."/>
            <person name="Cuomo C.A."/>
            <person name="Dewar K."/>
            <person name="FitzGerald M.G."/>
            <person name="Yang X."/>
            <person name="Allen N.R."/>
            <person name="Anderson S."/>
            <person name="Asakawa T."/>
            <person name="Blechschmidt K."/>
            <person name="Bloom T."/>
            <person name="Borowsky M.L."/>
            <person name="Butler J."/>
            <person name="Cook A."/>
            <person name="Corum B."/>
            <person name="DeArellano K."/>
            <person name="DeCaprio D."/>
            <person name="Dooley K.T."/>
            <person name="Dorris L. III"/>
            <person name="Engels R."/>
            <person name="Gloeckner G."/>
            <person name="Hafez N."/>
            <person name="Hagopian D.S."/>
            <person name="Hall J.L."/>
            <person name="Ishikawa S.K."/>
            <person name="Jaffe D.B."/>
            <person name="Kamat A."/>
            <person name="Kudoh J."/>
            <person name="Lehmann R."/>
            <person name="Lokitsang T."/>
            <person name="Macdonald P."/>
            <person name="Major J.E."/>
            <person name="Matthews C.D."/>
            <person name="Mauceli E."/>
            <person name="Menzel U."/>
            <person name="Mihalev A.H."/>
            <person name="Minoshima S."/>
            <person name="Murayama Y."/>
            <person name="Naylor J.W."/>
            <person name="Nicol R."/>
            <person name="Nguyen C."/>
            <person name="O'Leary S.B."/>
            <person name="O'Neill K."/>
            <person name="Parker S.C.J."/>
            <person name="Polley A."/>
            <person name="Raymond C.K."/>
            <person name="Reichwald K."/>
            <person name="Rodriguez J."/>
            <person name="Sasaki T."/>
            <person name="Schilhabel M."/>
            <person name="Siddiqui R."/>
            <person name="Smith C.L."/>
            <person name="Sneddon T.P."/>
            <person name="Talamas J.A."/>
            <person name="Tenzin P."/>
            <person name="Topham K."/>
            <person name="Venkataraman V."/>
            <person name="Wen G."/>
            <person name="Yamazaki S."/>
            <person name="Young S.K."/>
            <person name="Zeng Q."/>
            <person name="Zimmer A.R."/>
            <person name="Rosenthal A."/>
            <person name="Birren B.W."/>
            <person name="Platzer M."/>
            <person name="Shimizu N."/>
            <person name="Lander E.S."/>
        </authorList>
    </citation>
    <scope>NUCLEOTIDE SEQUENCE [LARGE SCALE GENOMIC DNA]</scope>
</reference>
<reference key="4">
    <citation type="journal article" date="2004" name="Nat. Genet.">
        <title>Complete sequencing and characterization of 21,243 full-length human cDNAs.</title>
        <authorList>
            <person name="Ota T."/>
            <person name="Suzuki Y."/>
            <person name="Nishikawa T."/>
            <person name="Otsuki T."/>
            <person name="Sugiyama T."/>
            <person name="Irie R."/>
            <person name="Wakamatsu A."/>
            <person name="Hayashi K."/>
            <person name="Sato H."/>
            <person name="Nagai K."/>
            <person name="Kimura K."/>
            <person name="Makita H."/>
            <person name="Sekine M."/>
            <person name="Obayashi M."/>
            <person name="Nishi T."/>
            <person name="Shibahara T."/>
            <person name="Tanaka T."/>
            <person name="Ishii S."/>
            <person name="Yamamoto J."/>
            <person name="Saito K."/>
            <person name="Kawai Y."/>
            <person name="Isono Y."/>
            <person name="Nakamura Y."/>
            <person name="Nagahari K."/>
            <person name="Murakami K."/>
            <person name="Yasuda T."/>
            <person name="Iwayanagi T."/>
            <person name="Wagatsuma M."/>
            <person name="Shiratori A."/>
            <person name="Sudo H."/>
            <person name="Hosoiri T."/>
            <person name="Kaku Y."/>
            <person name="Kodaira H."/>
            <person name="Kondo H."/>
            <person name="Sugawara M."/>
            <person name="Takahashi M."/>
            <person name="Kanda K."/>
            <person name="Yokoi T."/>
            <person name="Furuya T."/>
            <person name="Kikkawa E."/>
            <person name="Omura Y."/>
            <person name="Abe K."/>
            <person name="Kamihara K."/>
            <person name="Katsuta N."/>
            <person name="Sato K."/>
            <person name="Tanikawa M."/>
            <person name="Yamazaki M."/>
            <person name="Ninomiya K."/>
            <person name="Ishibashi T."/>
            <person name="Yamashita H."/>
            <person name="Murakawa K."/>
            <person name="Fujimori K."/>
            <person name="Tanai H."/>
            <person name="Kimata M."/>
            <person name="Watanabe M."/>
            <person name="Hiraoka S."/>
            <person name="Chiba Y."/>
            <person name="Ishida S."/>
            <person name="Ono Y."/>
            <person name="Takiguchi S."/>
            <person name="Watanabe S."/>
            <person name="Yosida M."/>
            <person name="Hotuta T."/>
            <person name="Kusano J."/>
            <person name="Kanehori K."/>
            <person name="Takahashi-Fujii A."/>
            <person name="Hara H."/>
            <person name="Tanase T.-O."/>
            <person name="Nomura Y."/>
            <person name="Togiya S."/>
            <person name="Komai F."/>
            <person name="Hara R."/>
            <person name="Takeuchi K."/>
            <person name="Arita M."/>
            <person name="Imose N."/>
            <person name="Musashino K."/>
            <person name="Yuuki H."/>
            <person name="Oshima A."/>
            <person name="Sasaki N."/>
            <person name="Aotsuka S."/>
            <person name="Yoshikawa Y."/>
            <person name="Matsunawa H."/>
            <person name="Ichihara T."/>
            <person name="Shiohata N."/>
            <person name="Sano S."/>
            <person name="Moriya S."/>
            <person name="Momiyama H."/>
            <person name="Satoh N."/>
            <person name="Takami S."/>
            <person name="Terashima Y."/>
            <person name="Suzuki O."/>
            <person name="Nakagawa S."/>
            <person name="Senoh A."/>
            <person name="Mizoguchi H."/>
            <person name="Goto Y."/>
            <person name="Shimizu F."/>
            <person name="Wakebe H."/>
            <person name="Hishigaki H."/>
            <person name="Watanabe T."/>
            <person name="Sugiyama A."/>
            <person name="Takemoto M."/>
            <person name="Kawakami B."/>
            <person name="Yamazaki M."/>
            <person name="Watanabe K."/>
            <person name="Kumagai A."/>
            <person name="Itakura S."/>
            <person name="Fukuzumi Y."/>
            <person name="Fujimori Y."/>
            <person name="Komiyama M."/>
            <person name="Tashiro H."/>
            <person name="Tanigami A."/>
            <person name="Fujiwara T."/>
            <person name="Ono T."/>
            <person name="Yamada K."/>
            <person name="Fujii Y."/>
            <person name="Ozaki K."/>
            <person name="Hirao M."/>
            <person name="Ohmori Y."/>
            <person name="Kawabata A."/>
            <person name="Hikiji T."/>
            <person name="Kobatake N."/>
            <person name="Inagaki H."/>
            <person name="Ikema Y."/>
            <person name="Okamoto S."/>
            <person name="Okitani R."/>
            <person name="Kawakami T."/>
            <person name="Noguchi S."/>
            <person name="Itoh T."/>
            <person name="Shigeta K."/>
            <person name="Senba T."/>
            <person name="Matsumura K."/>
            <person name="Nakajima Y."/>
            <person name="Mizuno T."/>
            <person name="Morinaga M."/>
            <person name="Sasaki M."/>
            <person name="Togashi T."/>
            <person name="Oyama M."/>
            <person name="Hata H."/>
            <person name="Watanabe M."/>
            <person name="Komatsu T."/>
            <person name="Mizushima-Sugano J."/>
            <person name="Satoh T."/>
            <person name="Shirai Y."/>
            <person name="Takahashi Y."/>
            <person name="Nakagawa K."/>
            <person name="Okumura K."/>
            <person name="Nagase T."/>
            <person name="Nomura N."/>
            <person name="Kikuchi H."/>
            <person name="Masuho Y."/>
            <person name="Yamashita R."/>
            <person name="Nakai K."/>
            <person name="Yada T."/>
            <person name="Nakamura Y."/>
            <person name="Ohara O."/>
            <person name="Isogai T."/>
            <person name="Sugano S."/>
        </authorList>
    </citation>
    <scope>NUCLEOTIDE SEQUENCE [LARGE SCALE MRNA] OF 11-440 (ISOFORM 3)</scope>
    <source>
        <tissue>Brain</tissue>
    </source>
</reference>
<reference key="5">
    <citation type="journal article" date="2004" name="Genome Res.">
        <title>The status, quality, and expansion of the NIH full-length cDNA project: the Mammalian Gene Collection (MGC).</title>
        <authorList>
            <consortium name="The MGC Project Team"/>
        </authorList>
    </citation>
    <scope>NUCLEOTIDE SEQUENCE [LARGE SCALE MRNA] (ISOFORM 1)</scope>
    <scope>VARIANTS HIS-907 AND ARG-1135</scope>
    <source>
        <tissue>Bone marrow</tissue>
    </source>
</reference>
<reference key="6">
    <citation type="journal article" date="2008" name="Proc. Natl. Acad. Sci. U.S.A.">
        <title>A quantitative atlas of mitotic phosphorylation.</title>
        <authorList>
            <person name="Dephoure N."/>
            <person name="Zhou C."/>
            <person name="Villen J."/>
            <person name="Beausoleil S.A."/>
            <person name="Bakalarski C.E."/>
            <person name="Elledge S.J."/>
            <person name="Gygi S.P."/>
        </authorList>
    </citation>
    <scope>IDENTIFICATION BY MASS SPECTROMETRY [LARGE SCALE ANALYSIS]</scope>
    <source>
        <tissue>Cervix carcinoma</tissue>
    </source>
</reference>
<reference key="7">
    <citation type="journal article" date="2009" name="Sci. Signal.">
        <title>Quantitative phosphoproteomic analysis of T cell receptor signaling reveals system-wide modulation of protein-protein interactions.</title>
        <authorList>
            <person name="Mayya V."/>
            <person name="Lundgren D.H."/>
            <person name="Hwang S.-I."/>
            <person name="Rezaul K."/>
            <person name="Wu L."/>
            <person name="Eng J.K."/>
            <person name="Rodionov V."/>
            <person name="Han D.K."/>
        </authorList>
    </citation>
    <scope>PHOSPHORYLATION [LARGE SCALE ANALYSIS] AT SER-527 AND SER-966</scope>
    <scope>IDENTIFICATION BY MASS SPECTROMETRY [LARGE SCALE ANALYSIS]</scope>
    <source>
        <tissue>Leukemic T-cell</tissue>
    </source>
</reference>
<reference key="8">
    <citation type="journal article" date="2010" name="Sci. Signal.">
        <title>Quantitative phosphoproteomics reveals widespread full phosphorylation site occupancy during mitosis.</title>
        <authorList>
            <person name="Olsen J.V."/>
            <person name="Vermeulen M."/>
            <person name="Santamaria A."/>
            <person name="Kumar C."/>
            <person name="Miller M.L."/>
            <person name="Jensen L.J."/>
            <person name="Gnad F."/>
            <person name="Cox J."/>
            <person name="Jensen T.S."/>
            <person name="Nigg E.A."/>
            <person name="Brunak S."/>
            <person name="Mann M."/>
        </authorList>
    </citation>
    <scope>PHOSPHORYLATION [LARGE SCALE ANALYSIS] AT SER-966</scope>
    <scope>IDENTIFICATION BY MASS SPECTROMETRY [LARGE SCALE ANALYSIS]</scope>
    <source>
        <tissue>Cervix carcinoma</tissue>
    </source>
</reference>
<reference key="9">
    <citation type="journal article" date="2013" name="J. Proteome Res.">
        <title>Toward a comprehensive characterization of a human cancer cell phosphoproteome.</title>
        <authorList>
            <person name="Zhou H."/>
            <person name="Di Palma S."/>
            <person name="Preisinger C."/>
            <person name="Peng M."/>
            <person name="Polat A.N."/>
            <person name="Heck A.J."/>
            <person name="Mohammed S."/>
        </authorList>
    </citation>
    <scope>PHOSPHORYLATION [LARGE SCALE ANALYSIS] AT SER-244; SER-459; SER-527; SER-901; SER-920 AND SER-966</scope>
    <scope>IDENTIFICATION BY MASS SPECTROMETRY [LARGE SCALE ANALYSIS]</scope>
    <source>
        <tissue>Cervix carcinoma</tissue>
        <tissue>Erythroleukemia</tissue>
    </source>
</reference>
<reference key="10">
    <citation type="journal article" date="2014" name="Am. J. Hum. Genet.">
        <title>Mutations in CSPP1 cause primary cilia abnormalities and Joubert syndrome with or without Jeune asphyxiating thoracic dystrophy.</title>
        <authorList>
            <person name="Tuz K."/>
            <person name="Bachmann-Gagescu R."/>
            <person name="O'Day D.R."/>
            <person name="Hua K."/>
            <person name="Isabella C.R."/>
            <person name="Phelps I.G."/>
            <person name="Stolarski A.E."/>
            <person name="O'Roak B.J."/>
            <person name="Dempsey J.C."/>
            <person name="Lourenco C."/>
            <person name="Alswaid A."/>
            <person name="Bonnemann C.G."/>
            <person name="Medne L."/>
            <person name="Nampoothiri S."/>
            <person name="Stark Z."/>
            <person name="Leventer R.J."/>
            <person name="Topcu M."/>
            <person name="Cansu A."/>
            <person name="Jagadeesh S."/>
            <person name="Done S."/>
            <person name="Ishak G.E."/>
            <person name="Glass I.A."/>
            <person name="Shendure J."/>
            <person name="Neuhauss S.C."/>
            <person name="Haldeman-Englert C.R."/>
            <person name="Doherty D."/>
            <person name="Ferland R.J."/>
        </authorList>
    </citation>
    <scope>INVOLVEMENT IN JBTS21</scope>
</reference>
<reference key="11">
    <citation type="journal article" date="2014" name="Am. J. Hum. Genet.">
        <title>Mutations in CSPP1, encoding a core centrosomal protein, cause a range of ciliopathy phenotypes in humans.</title>
        <authorList>
            <person name="Shaheen R."/>
            <person name="Shamseldin H.E."/>
            <person name="Loucks C.M."/>
            <person name="Seidahmed M.Z."/>
            <person name="Ansari S."/>
            <person name="Ibrahim Khalil M."/>
            <person name="Al-Yacoub N."/>
            <person name="Davis E.E."/>
            <person name="Mola N.A."/>
            <person name="Szymanska K."/>
            <person name="Herridge W."/>
            <person name="Chudley A.E."/>
            <person name="Chodirker B.N."/>
            <person name="Schwartzentruber J."/>
            <person name="Majewski J."/>
            <person name="Katsanis N."/>
            <person name="Poizat C."/>
            <person name="Johnson C.A."/>
            <person name="Parboosingh J."/>
            <person name="Boycott K.M."/>
            <person name="Innes A.M."/>
            <person name="Alkuraya F.S."/>
        </authorList>
    </citation>
    <scope>INVOLVEMENT IN JBTS21</scope>
</reference>
<reference key="12">
    <citation type="journal article" date="2014" name="Am. J. Hum. Genet.">
        <title>Mutations in CSPP1 lead to classical Joubert syndrome.</title>
        <authorList>
            <person name="Akizu N."/>
            <person name="Silhavy J.L."/>
            <person name="Rosti R.O."/>
            <person name="Scott E."/>
            <person name="Fenstermaker A.G."/>
            <person name="Schroth J."/>
            <person name="Zaki M.S."/>
            <person name="Sanchez H."/>
            <person name="Gupta N."/>
            <person name="Kabra M."/>
            <person name="Kara M."/>
            <person name="Ben-Omran T."/>
            <person name="Rosti B."/>
            <person name="Guemez-Gamboa A."/>
            <person name="Spencer E."/>
            <person name="Pan R."/>
            <person name="Cai N."/>
            <person name="Abdellateef M."/>
            <person name="Gabriel S."/>
            <person name="Halbritter J."/>
            <person name="Hildebrandt F."/>
            <person name="van Bokhoven H."/>
            <person name="Gunel M."/>
            <person name="Gleeson J.G."/>
        </authorList>
    </citation>
    <scope>TISSUE SPECIFICITY</scope>
    <scope>INVOLVEMENT IN JBTS21</scope>
</reference>
<reference key="13">
    <citation type="journal article" date="2020" name="J. Clin. Invest.">
        <title>Dysfunction of the ciliary ARMC9/TOGARAM1 protein module causes Joubert syndrome.</title>
        <authorList>
            <consortium name="University of Washington Center for Mendelian Genomics"/>
            <consortium name="Genomics England Research Consortium"/>
            <person name="Latour B.L."/>
            <person name="Van De Weghe J.C."/>
            <person name="Rusterholz T.D."/>
            <person name="Letteboer S.J."/>
            <person name="Gomez A."/>
            <person name="Shaheen R."/>
            <person name="Gesemann M."/>
            <person name="Karamzade A."/>
            <person name="Asadollahi M."/>
            <person name="Barroso-Gil M."/>
            <person name="Chitre M."/>
            <person name="Grout M.E."/>
            <person name="van Reeuwijk J."/>
            <person name="van Beersum S.E."/>
            <person name="Miller C.V."/>
            <person name="Dempsey J.C."/>
            <person name="Morsy H."/>
            <person name="Bamshad M.J."/>
            <person name="Nickerson D.A."/>
            <person name="Neuhauss S.C."/>
            <person name="Boldt K."/>
            <person name="Ueffing M."/>
            <person name="Keramatipour M."/>
            <person name="Sayer J.A."/>
            <person name="Alkuraya F.S."/>
            <person name="Bachmann-Gagescu R."/>
            <person name="Roepman R."/>
            <person name="Doherty D."/>
        </authorList>
    </citation>
    <scope>INTERACTION WITH ARMC9; TOGARAM1; CCDC66; CEP104 AND CEP290</scope>
</reference>
<reference key="14">
    <citation type="journal article" date="2023" name="J. Cell Sci.">
        <title>CCDC66 regulates primary cilium length and signaling via interactions with transition zone and axonemal proteins.</title>
        <authorList>
            <person name="Odabasi E."/>
            <person name="Conkar D."/>
            <person name="Deretic J."/>
            <person name="Batman U."/>
            <person name="Frikstad K.M."/>
            <person name="Patzke S."/>
            <person name="Firat-Karalar E.N."/>
        </authorList>
    </citation>
    <scope>SUBCELLULAR LOCATION</scope>
    <scope>INTERACTION WITH CCDC66</scope>
</reference>
<keyword id="KW-0025">Alternative splicing</keyword>
<keyword id="KW-0966">Cell projection</keyword>
<keyword id="KW-1186">Ciliopathy</keyword>
<keyword id="KW-0175">Coiled coil</keyword>
<keyword id="KW-0963">Cytoplasm</keyword>
<keyword id="KW-0206">Cytoskeleton</keyword>
<keyword id="KW-0979">Joubert syndrome</keyword>
<keyword id="KW-0493">Microtubule</keyword>
<keyword id="KW-0597">Phosphoprotein</keyword>
<keyword id="KW-1267">Proteomics identification</keyword>
<keyword id="KW-1185">Reference proteome</keyword>
<comment type="function">
    <text evidence="6">May play a role in cell-cycle-dependent microtubule organization.</text>
</comment>
<comment type="subunit">
    <text evidence="1 10 11">Interacts with PLEKHG6. Interacts with ARMC9, TOGARAM1, CCDC66, CEP104 and CEP290 (PubMed:32453716, PubMed:36606424).</text>
</comment>
<comment type="interaction">
    <interactant intactId="EBI-10239122">
        <id>Q1MSJ5-1</id>
    </interactant>
    <interactant intactId="EBI-618309">
        <id>Q08379</id>
        <label>GOLGA2</label>
    </interactant>
    <organismsDiffer>false</organismsDiffer>
    <experiments>3</experiments>
</comment>
<comment type="interaction">
    <interactant intactId="EBI-10239122">
        <id>Q1MSJ5-1</id>
    </interactant>
    <interactant intactId="EBI-357275">
        <id>Q99471</id>
        <label>PFDN5</label>
    </interactant>
    <organismsDiffer>false</organismsDiffer>
    <experiments>3</experiments>
</comment>
<comment type="interaction">
    <interactant intactId="EBI-10239122">
        <id>Q1MSJ5-1</id>
    </interactant>
    <interactant intactId="EBI-726876">
        <id>Q6NUQ1</id>
        <label>RINT1</label>
    </interactant>
    <organismsDiffer>false</organismsDiffer>
    <experiments>3</experiments>
</comment>
<comment type="interaction">
    <interactant intactId="EBI-10239155">
        <id>Q1MSJ5-2</id>
    </interactant>
    <interactant intactId="EBI-748896">
        <id>Q96HT8</id>
        <label>MRFAP1L1</label>
    </interactant>
    <organismsDiffer>false</organismsDiffer>
    <experiments>3</experiments>
</comment>
<comment type="interaction">
    <interactant intactId="EBI-10239155">
        <id>Q1MSJ5-2</id>
    </interactant>
    <interactant intactId="EBI-1050213">
        <id>Q96KN7</id>
        <label>RPGRIP1</label>
    </interactant>
    <organismsDiffer>false</organismsDiffer>
    <experiments>3</experiments>
</comment>
<comment type="subcellular location">
    <subcellularLocation>
        <location evidence="5 6">Cytoplasm</location>
        <location evidence="5 6">Cytoskeleton</location>
        <location evidence="5 6">Microtubule organizing center</location>
        <location evidence="5 6">Centrosome</location>
    </subcellularLocation>
    <subcellularLocation>
        <location evidence="5 6">Cytoplasm</location>
        <location evidence="5 6">Cytoskeleton</location>
        <location evidence="5 6">Spindle</location>
    </subcellularLocation>
    <subcellularLocation>
        <location evidence="6">Cytoplasm</location>
        <location evidence="6">Cytoskeleton</location>
        <location evidence="6">Spindle pole</location>
    </subcellularLocation>
    <subcellularLocation>
        <location evidence="11">Cell projection</location>
        <location evidence="11">Cilium</location>
    </subcellularLocation>
    <text evidence="5 6">Associated with mitotic spindles.</text>
</comment>
<comment type="alternative products">
    <event type="alternative splicing"/>
    <isoform>
        <id>Q1MSJ5-3</id>
        <name>3</name>
        <sequence type="displayed"/>
    </isoform>
    <isoform>
        <id>Q1MSJ5-1</id>
        <name>1</name>
        <name>CSPP-L</name>
        <sequence type="described" ref="VSP_040072"/>
    </isoform>
    <isoform>
        <id>Q1MSJ5-2</id>
        <name>2</name>
        <name>CSPP</name>
        <name>CSPP-S</name>
        <sequence type="described" ref="VSP_026475 VSP_026476"/>
    </isoform>
</comment>
<comment type="tissue specificity">
    <text evidence="5 8">Expressed in adult and fetal brain with enrichment in the cerebellum. Detected in testis.</text>
</comment>
<comment type="developmental stage">
    <text evidence="6">Isoform 1 expression increases throughout the cell cycle and peaks in G2/M phase. Isoform 2 expression is highest in G1 phase and decreases thereafter.</text>
</comment>
<comment type="PTM">
    <text evidence="5">Phosphorylated. Phosphorylation increases in colcemide-treated cells.</text>
</comment>
<comment type="disease" evidence="7 8 9">
    <disease id="DI-04019">
        <name>Joubert syndrome 21</name>
        <acronym>JBTS21</acronym>
        <description>A disorder presenting with cerebellar ataxia, oculomotor apraxia, hypotonia, neonatal breathing abnormalities and psychomotor delay. Neuroradiologically, it is characterized by cerebellar vermian hypoplasia/aplasia, thickened and reoriented superior cerebellar peduncles, and an abnormally large interpeduncular fossa, giving the appearance of a molar tooth on transaxial slices (molar tooth sign). Additional variable features include retinal dystrophy, renal disease, liver fibrosis, and polydactyly.</description>
        <dbReference type="MIM" id="615636"/>
    </disease>
    <text>The disease is caused by variants affecting the gene represented in this entry.</text>
</comment>
<comment type="sequence caution" evidence="14">
    <conflict type="erroneous initiation">
        <sequence resource="EMBL-CDS" id="AAH22867"/>
    </conflict>
    <text>Truncated N-terminus.</text>
</comment>
<sequence length="1256" mass="145522">MLFPLQVAAVTSSVRDDPLEHCVSPRTRARSPEICKMADNLDEFIEEQKARLAEDKAELESDPPYMEMKGKLSAKLSENSKILISMAKENIPPNSQQTRGSLGIDYGLSLPLGEDYERKKHKLKEELRQDYRRYLTQGITQGKRKKNFLSTSETDPSTLGVSLPIGERLSAKERLKLERNKEYNQFLRGKEESSEKFRQVEKSTEPKSQRNKKPIGQVKPDLTSQIQTSCENSEGPRKDVLTPSEAYEELLNQRRLEEDRYRQLDDEIELRNRRIIKKANEEVGISNLKHQRFASKAGIPDRRFHRFNEDRVFDRRYHRPDQDPEVSEEMDERFRYESDFDRRLSRVYTNDRMHRNKRGNMPPMEHDGDVIEQSNIRISSAENKSAPDNETSKSANQDTCSPFAGMLFGGEDRELIQRRKEKYRLELLEQMAEQQRNKRREKDLELRVAASGAQDPEKSPDRLKQFSVAPRHFEEMIPPERPRIAFQTPLPPLSAPSVPPIPSVHPVPSQNEDLRSGLSSALGEMVSPRIAPLPPPPLLPPLATNYRTPYDDAYYFYGSRNTFDPSLAYYGSGMMGVQPAAYVSAPVTHQLAQPVVNTVGQNELKITSDQVINSGLIFEDKPKPSKQSLQSYQEALQQQIREREERRKKEREEKEEYEAKLEAEMRTYNPWGKGGGGAPLRDAKGNLITDLNRMHRQNIDAYHNPDARTYEDKRAVVSLDPNLATSNAENLEDAANKSSGHMQTQSSPFARGNVFGEPPTELQIKQQELYKNFLRFQIEEKKQREEAERERLRIAEEKEERRLAEQRARIQQEYEEEQEKKREKEEEQRLKNEEHIRLAEERQKEAERKKKEEEEKYNLQLQHYCERDNLIGEETKHMRQPSPIVPALQNKIASKLQRPPSVDSIIRSFIHESSMSRAQSPPVPARKNQLRAEEEKKNVIMELSEMRKQLRSEERRLQERLLHMDSDDEIPIRKKERNPMDIFDMARHRLQAPVRRQSPKGLDAATFQNVHDFNELKDRDSETRVDLKFMYLDPPRDHHTLEIQQQALLREQQKRLNRIKMQEGAKVDLDAIPSAKVREQRMPRDDTSDFLKNSLLESDSAFIGAYGETYPAIEDDVLPPPSQLPSARERRRNKWKGLDIDSSRPNVAPDGLSLKSISSVNVDELRVRNEERMRRLNEFHNKPINTDDESSLVDPDDIMKHIGDDGSNSVATEPWLRPGTSETLKRFMAEQLNQEQQQIPGKPGTFTWQGLSTAHG</sequence>
<proteinExistence type="evidence at protein level"/>
<gene>
    <name type="primary">CSPP1</name>
    <name type="synonym">CSPP</name>
</gene>
<organism>
    <name type="scientific">Homo sapiens</name>
    <name type="common">Human</name>
    <dbReference type="NCBI Taxonomy" id="9606"/>
    <lineage>
        <taxon>Eukaryota</taxon>
        <taxon>Metazoa</taxon>
        <taxon>Chordata</taxon>
        <taxon>Craniata</taxon>
        <taxon>Vertebrata</taxon>
        <taxon>Euteleostomi</taxon>
        <taxon>Mammalia</taxon>
        <taxon>Eutheria</taxon>
        <taxon>Euarchontoglires</taxon>
        <taxon>Primates</taxon>
        <taxon>Haplorrhini</taxon>
        <taxon>Catarrhini</taxon>
        <taxon>Hominidae</taxon>
        <taxon>Homo</taxon>
    </lineage>
</organism>
<evidence type="ECO:0000250" key="1">
    <source>
        <dbReference type="UniProtKB" id="B2RX88"/>
    </source>
</evidence>
<evidence type="ECO:0000255" key="2"/>
<evidence type="ECO:0000256" key="3">
    <source>
        <dbReference type="SAM" id="MobiDB-lite"/>
    </source>
</evidence>
<evidence type="ECO:0000269" key="4">
    <source>
    </source>
</evidence>
<evidence type="ECO:0000269" key="5">
    <source>
    </source>
</evidence>
<evidence type="ECO:0000269" key="6">
    <source>
    </source>
</evidence>
<evidence type="ECO:0000269" key="7">
    <source>
    </source>
</evidence>
<evidence type="ECO:0000269" key="8">
    <source>
    </source>
</evidence>
<evidence type="ECO:0000269" key="9">
    <source>
    </source>
</evidence>
<evidence type="ECO:0000269" key="10">
    <source>
    </source>
</evidence>
<evidence type="ECO:0000269" key="11">
    <source>
    </source>
</evidence>
<evidence type="ECO:0000303" key="12">
    <source>
    </source>
</evidence>
<evidence type="ECO:0000303" key="13">
    <source>
    </source>
</evidence>
<evidence type="ECO:0000305" key="14"/>
<evidence type="ECO:0007744" key="15">
    <source>
    </source>
</evidence>
<evidence type="ECO:0007744" key="16">
    <source>
    </source>
</evidence>
<evidence type="ECO:0007744" key="17">
    <source>
    </source>
</evidence>
<feature type="chain" id="PRO_0000293464" description="Centrosome and spindle pole-associated protein 1">
    <location>
        <begin position="1"/>
        <end position="1256"/>
    </location>
</feature>
<feature type="region of interest" description="Disordered" evidence="3">
    <location>
        <begin position="189"/>
        <end position="244"/>
    </location>
</feature>
<feature type="region of interest" description="Disordered" evidence="3">
    <location>
        <begin position="381"/>
        <end position="403"/>
    </location>
</feature>
<feature type="region of interest" description="Disordered" evidence="3">
    <location>
        <begin position="735"/>
        <end position="757"/>
    </location>
</feature>
<feature type="region of interest" description="Disordered" evidence="3">
    <location>
        <begin position="813"/>
        <end position="853"/>
    </location>
</feature>
<feature type="region of interest" description="Disordered" evidence="3">
    <location>
        <begin position="913"/>
        <end position="932"/>
    </location>
</feature>
<feature type="region of interest" description="Disordered" evidence="3">
    <location>
        <begin position="1114"/>
        <end position="1147"/>
    </location>
</feature>
<feature type="region of interest" description="Disordered" evidence="3">
    <location>
        <begin position="1232"/>
        <end position="1256"/>
    </location>
</feature>
<feature type="coiled-coil region" evidence="2">
    <location>
        <begin position="38"/>
        <end position="62"/>
    </location>
</feature>
<feature type="coiled-coil region" evidence="2">
    <location>
        <begin position="114"/>
        <end position="135"/>
    </location>
</feature>
<feature type="coiled-coil region" evidence="2">
    <location>
        <begin position="244"/>
        <end position="270"/>
    </location>
</feature>
<feature type="coiled-coil region" evidence="2">
    <location>
        <begin position="417"/>
        <end position="449"/>
    </location>
</feature>
<feature type="coiled-coil region" evidence="2">
    <location>
        <begin position="625"/>
        <end position="669"/>
    </location>
</feature>
<feature type="coiled-coil region" evidence="2">
    <location>
        <begin position="925"/>
        <end position="964"/>
    </location>
</feature>
<feature type="compositionally biased region" description="Basic and acidic residues" evidence="3">
    <location>
        <begin position="189"/>
        <end position="208"/>
    </location>
</feature>
<feature type="compositionally biased region" description="Polar residues" evidence="3">
    <location>
        <begin position="222"/>
        <end position="232"/>
    </location>
</feature>
<feature type="compositionally biased region" description="Polar residues" evidence="3">
    <location>
        <begin position="736"/>
        <end position="748"/>
    </location>
</feature>
<feature type="compositionally biased region" description="Polar residues" evidence="3">
    <location>
        <begin position="1246"/>
        <end position="1256"/>
    </location>
</feature>
<feature type="modified residue" description="Phosphoserine" evidence="17">
    <location>
        <position position="244"/>
    </location>
</feature>
<feature type="modified residue" description="Phosphoserine" evidence="17">
    <location>
        <position position="459"/>
    </location>
</feature>
<feature type="modified residue" description="Phosphoserine" evidence="15 17">
    <location>
        <position position="527"/>
    </location>
</feature>
<feature type="modified residue" description="Phosphoserine" evidence="17">
    <location>
        <position position="901"/>
    </location>
</feature>
<feature type="modified residue" description="Phosphoserine" evidence="17">
    <location>
        <position position="920"/>
    </location>
</feature>
<feature type="modified residue" description="Phosphoserine" evidence="15 16 17">
    <location>
        <position position="966"/>
    </location>
</feature>
<feature type="splice variant" id="VSP_026475" description="In isoform 2." evidence="12">
    <location>
        <begin position="1"/>
        <end position="329"/>
    </location>
</feature>
<feature type="splice variant" id="VSP_040072" description="In isoform 1." evidence="13">
    <location>
        <begin position="138"/>
        <end position="172"/>
    </location>
</feature>
<feature type="splice variant" id="VSP_026476" description="In isoform 2." evidence="12">
    <original>TDLNRMHRQNIDAYHNPDARTYEDKRAVVSLDPNLATSNAENLEDAANKSSG</original>
    <variation>S</variation>
    <location>
        <begin position="689"/>
        <end position="740"/>
    </location>
</feature>
<feature type="sequence variant" id="VAR_033045" description="In dbSNP:rs16933182." evidence="4">
    <original>R</original>
    <variation>H</variation>
    <location>
        <position position="907"/>
    </location>
</feature>
<feature type="sequence variant" id="VAR_047014" description="In dbSNP:rs1808140." evidence="4">
    <original>W</original>
    <variation>R</variation>
    <location>
        <position position="1135"/>
    </location>
</feature>
<feature type="sequence conflict" description="In Ref. 1; CAE47426 and 2; CAJ42307." evidence="14" ref="1 2">
    <original>E</original>
    <variation>G</variation>
    <location>
        <position position="855"/>
    </location>
</feature>
<feature type="sequence conflict" description="In Ref. 5; AAH22867." evidence="14" ref="5">
    <original>Q</original>
    <variation>E</variation>
    <location>
        <position position="860"/>
    </location>
</feature>
<feature type="sequence conflict" description="In Ref. 1; CAE47426 and 2; CAJ42307." evidence="14" ref="1 2">
    <original>I</original>
    <variation>T</variation>
    <location>
        <position position="905"/>
    </location>
</feature>
<feature type="sequence conflict" description="In Ref. 1; CAE47426 and 2; CAJ42307." evidence="14" ref="1 2">
    <original>R</original>
    <variation>K</variation>
    <location>
        <position position="955"/>
    </location>
</feature>